<sequence>MKSSIVAKLEALQERHEEVLAYLGDASVIADQDRFRALSREYAQLTDVTRCFKEWRSAQDDIEAAEMMLDDLEMREMAQEELKIAKARSEELEQQLQVLLLPKDPDDERDCFLEIRAGTGGDEAAIFAGDMFRMYSRYAETRRWKVEIMSASEGEHGGYKEIIAKISGDGVFGQLKFESGGHRVQRVPETESQGRIHTSACTVAVMPAIPEAELPEINAGDLRIDTFRSSGAGGQHVNTTDSAIRITHIPTGIVVECQDERSQHKNKAKAMSVLGARIRAAEMQKRQLAEASERRNLLGTGDRSDRNRTYNFPQGRVTDHRINLTLYRLDEVMEGKLDMLIQPIVQEYQADQLSALSEQD</sequence>
<gene>
    <name evidence="1" type="primary">prfA</name>
    <name type="ordered locus">YPTS_2063</name>
</gene>
<comment type="function">
    <text evidence="1">Peptide chain release factor 1 directs the termination of translation in response to the peptide chain termination codons UAG and UAA.</text>
</comment>
<comment type="subcellular location">
    <subcellularLocation>
        <location evidence="1">Cytoplasm</location>
    </subcellularLocation>
</comment>
<comment type="PTM">
    <text evidence="1">Methylated by PrmC. Methylation increases the termination efficiency of RF1.</text>
</comment>
<comment type="similarity">
    <text evidence="1">Belongs to the prokaryotic/mitochondrial release factor family.</text>
</comment>
<keyword id="KW-0963">Cytoplasm</keyword>
<keyword id="KW-0488">Methylation</keyword>
<keyword id="KW-0648">Protein biosynthesis</keyword>
<dbReference type="EMBL" id="CP001048">
    <property type="protein sequence ID" value="ACC89029.1"/>
    <property type="molecule type" value="Genomic_DNA"/>
</dbReference>
<dbReference type="RefSeq" id="WP_002211236.1">
    <property type="nucleotide sequence ID" value="NZ_CP009780.1"/>
</dbReference>
<dbReference type="SMR" id="B2K2Z0"/>
<dbReference type="GeneID" id="57976644"/>
<dbReference type="KEGG" id="ypb:YPTS_2063"/>
<dbReference type="PATRIC" id="fig|502801.10.peg.1452"/>
<dbReference type="GO" id="GO:0005737">
    <property type="term" value="C:cytoplasm"/>
    <property type="evidence" value="ECO:0007669"/>
    <property type="project" value="UniProtKB-SubCell"/>
</dbReference>
<dbReference type="GO" id="GO:0016149">
    <property type="term" value="F:translation release factor activity, codon specific"/>
    <property type="evidence" value="ECO:0007669"/>
    <property type="project" value="UniProtKB-UniRule"/>
</dbReference>
<dbReference type="FunFam" id="3.30.160.20:FF:000004">
    <property type="entry name" value="Peptide chain release factor 1"/>
    <property type="match status" value="1"/>
</dbReference>
<dbReference type="FunFam" id="3.30.70.1660:FF:000002">
    <property type="entry name" value="Peptide chain release factor 1"/>
    <property type="match status" value="1"/>
</dbReference>
<dbReference type="FunFam" id="3.30.70.1660:FF:000004">
    <property type="entry name" value="Peptide chain release factor 1"/>
    <property type="match status" value="1"/>
</dbReference>
<dbReference type="Gene3D" id="3.30.160.20">
    <property type="match status" value="1"/>
</dbReference>
<dbReference type="Gene3D" id="3.30.70.1660">
    <property type="match status" value="1"/>
</dbReference>
<dbReference type="Gene3D" id="6.10.140.1950">
    <property type="match status" value="1"/>
</dbReference>
<dbReference type="HAMAP" id="MF_00093">
    <property type="entry name" value="Rel_fac_1"/>
    <property type="match status" value="1"/>
</dbReference>
<dbReference type="InterPro" id="IPR005139">
    <property type="entry name" value="PCRF"/>
</dbReference>
<dbReference type="InterPro" id="IPR000352">
    <property type="entry name" value="Pep_chain_release_fac_I"/>
</dbReference>
<dbReference type="InterPro" id="IPR045853">
    <property type="entry name" value="Pep_chain_release_fac_I_sf"/>
</dbReference>
<dbReference type="InterPro" id="IPR050057">
    <property type="entry name" value="Prokaryotic/Mito_RF"/>
</dbReference>
<dbReference type="InterPro" id="IPR004373">
    <property type="entry name" value="RF-1"/>
</dbReference>
<dbReference type="NCBIfam" id="TIGR00019">
    <property type="entry name" value="prfA"/>
    <property type="match status" value="1"/>
</dbReference>
<dbReference type="NCBIfam" id="NF001859">
    <property type="entry name" value="PRK00591.1"/>
    <property type="match status" value="1"/>
</dbReference>
<dbReference type="PANTHER" id="PTHR43804">
    <property type="entry name" value="LD18447P"/>
    <property type="match status" value="1"/>
</dbReference>
<dbReference type="PANTHER" id="PTHR43804:SF7">
    <property type="entry name" value="LD18447P"/>
    <property type="match status" value="1"/>
</dbReference>
<dbReference type="Pfam" id="PF03462">
    <property type="entry name" value="PCRF"/>
    <property type="match status" value="1"/>
</dbReference>
<dbReference type="Pfam" id="PF00472">
    <property type="entry name" value="RF-1"/>
    <property type="match status" value="1"/>
</dbReference>
<dbReference type="SMART" id="SM00937">
    <property type="entry name" value="PCRF"/>
    <property type="match status" value="1"/>
</dbReference>
<dbReference type="SUPFAM" id="SSF75620">
    <property type="entry name" value="Release factor"/>
    <property type="match status" value="1"/>
</dbReference>
<dbReference type="PROSITE" id="PS00745">
    <property type="entry name" value="RF_PROK_I"/>
    <property type="match status" value="1"/>
</dbReference>
<name>RF1_YERPB</name>
<feature type="chain" id="PRO_1000093528" description="Peptide chain release factor 1">
    <location>
        <begin position="1"/>
        <end position="360"/>
    </location>
</feature>
<feature type="region of interest" description="Disordered" evidence="2">
    <location>
        <begin position="291"/>
        <end position="312"/>
    </location>
</feature>
<feature type="compositionally biased region" description="Basic and acidic residues" evidence="2">
    <location>
        <begin position="291"/>
        <end position="308"/>
    </location>
</feature>
<feature type="modified residue" description="N5-methylglutamine" evidence="1">
    <location>
        <position position="235"/>
    </location>
</feature>
<proteinExistence type="inferred from homology"/>
<accession>B2K2Z0</accession>
<reference key="1">
    <citation type="submission" date="2008-04" db="EMBL/GenBank/DDBJ databases">
        <title>Complete sequence of Yersinia pseudotuberculosis PB1/+.</title>
        <authorList>
            <person name="Copeland A."/>
            <person name="Lucas S."/>
            <person name="Lapidus A."/>
            <person name="Glavina del Rio T."/>
            <person name="Dalin E."/>
            <person name="Tice H."/>
            <person name="Bruce D."/>
            <person name="Goodwin L."/>
            <person name="Pitluck S."/>
            <person name="Munk A.C."/>
            <person name="Brettin T."/>
            <person name="Detter J.C."/>
            <person name="Han C."/>
            <person name="Tapia R."/>
            <person name="Schmutz J."/>
            <person name="Larimer F."/>
            <person name="Land M."/>
            <person name="Hauser L."/>
            <person name="Challacombe J.F."/>
            <person name="Green L."/>
            <person name="Lindler L.E."/>
            <person name="Nikolich M.P."/>
            <person name="Richardson P."/>
        </authorList>
    </citation>
    <scope>NUCLEOTIDE SEQUENCE [LARGE SCALE GENOMIC DNA]</scope>
    <source>
        <strain>PB1/+</strain>
    </source>
</reference>
<evidence type="ECO:0000255" key="1">
    <source>
        <dbReference type="HAMAP-Rule" id="MF_00093"/>
    </source>
</evidence>
<evidence type="ECO:0000256" key="2">
    <source>
        <dbReference type="SAM" id="MobiDB-lite"/>
    </source>
</evidence>
<organism>
    <name type="scientific">Yersinia pseudotuberculosis serotype IB (strain PB1/+)</name>
    <dbReference type="NCBI Taxonomy" id="502801"/>
    <lineage>
        <taxon>Bacteria</taxon>
        <taxon>Pseudomonadati</taxon>
        <taxon>Pseudomonadota</taxon>
        <taxon>Gammaproteobacteria</taxon>
        <taxon>Enterobacterales</taxon>
        <taxon>Yersiniaceae</taxon>
        <taxon>Yersinia</taxon>
    </lineage>
</organism>
<protein>
    <recommendedName>
        <fullName evidence="1">Peptide chain release factor 1</fullName>
        <shortName evidence="1">RF-1</shortName>
    </recommendedName>
</protein>